<accession>Q0AIH8</accession>
<comment type="subunit">
    <text evidence="1">Part of the 50S ribosomal subunit.</text>
</comment>
<comment type="similarity">
    <text evidence="1">Belongs to the universal ribosomal protein uL30 family.</text>
</comment>
<feature type="chain" id="PRO_1000056080" description="Large ribosomal subunit protein uL30">
    <location>
        <begin position="1"/>
        <end position="61"/>
    </location>
</feature>
<keyword id="KW-0687">Ribonucleoprotein</keyword>
<keyword id="KW-0689">Ribosomal protein</keyword>
<reference key="1">
    <citation type="journal article" date="2007" name="Environ. Microbiol.">
        <title>Whole-genome analysis of the ammonia-oxidizing bacterium, Nitrosomonas eutropha C91: implications for niche adaptation.</title>
        <authorList>
            <person name="Stein L.Y."/>
            <person name="Arp D.J."/>
            <person name="Berube P.M."/>
            <person name="Chain P.S."/>
            <person name="Hauser L."/>
            <person name="Jetten M.S."/>
            <person name="Klotz M.G."/>
            <person name="Larimer F.W."/>
            <person name="Norton J.M."/>
            <person name="Op den Camp H.J.M."/>
            <person name="Shin M."/>
            <person name="Wei X."/>
        </authorList>
    </citation>
    <scope>NUCLEOTIDE SEQUENCE [LARGE SCALE GENOMIC DNA]</scope>
    <source>
        <strain>DSM 101675 / C91 / Nm57</strain>
    </source>
</reference>
<protein>
    <recommendedName>
        <fullName evidence="1">Large ribosomal subunit protein uL30</fullName>
    </recommendedName>
    <alternativeName>
        <fullName evidence="2">50S ribosomal protein L30</fullName>
    </alternativeName>
</protein>
<gene>
    <name evidence="1" type="primary">rpmD</name>
    <name type="ordered locus">Neut_0576</name>
</gene>
<name>RL30_NITEC</name>
<proteinExistence type="inferred from homology"/>
<organism>
    <name type="scientific">Nitrosomonas eutropha (strain DSM 101675 / C91 / Nm57)</name>
    <dbReference type="NCBI Taxonomy" id="335283"/>
    <lineage>
        <taxon>Bacteria</taxon>
        <taxon>Pseudomonadati</taxon>
        <taxon>Pseudomonadota</taxon>
        <taxon>Betaproteobacteria</taxon>
        <taxon>Nitrosomonadales</taxon>
        <taxon>Nitrosomonadaceae</taxon>
        <taxon>Nitrosomonas</taxon>
    </lineage>
</organism>
<dbReference type="EMBL" id="CP000450">
    <property type="protein sequence ID" value="ABI58848.1"/>
    <property type="molecule type" value="Genomic_DNA"/>
</dbReference>
<dbReference type="RefSeq" id="WP_011633690.1">
    <property type="nucleotide sequence ID" value="NC_008344.1"/>
</dbReference>
<dbReference type="SMR" id="Q0AIH8"/>
<dbReference type="STRING" id="335283.Neut_0576"/>
<dbReference type="KEGG" id="net:Neut_0576"/>
<dbReference type="eggNOG" id="COG1841">
    <property type="taxonomic scope" value="Bacteria"/>
</dbReference>
<dbReference type="HOGENOM" id="CLU_131047_1_4_4"/>
<dbReference type="OrthoDB" id="9812790at2"/>
<dbReference type="Proteomes" id="UP000001966">
    <property type="component" value="Chromosome"/>
</dbReference>
<dbReference type="GO" id="GO:0022625">
    <property type="term" value="C:cytosolic large ribosomal subunit"/>
    <property type="evidence" value="ECO:0007669"/>
    <property type="project" value="TreeGrafter"/>
</dbReference>
<dbReference type="GO" id="GO:0003735">
    <property type="term" value="F:structural constituent of ribosome"/>
    <property type="evidence" value="ECO:0007669"/>
    <property type="project" value="InterPro"/>
</dbReference>
<dbReference type="GO" id="GO:0006412">
    <property type="term" value="P:translation"/>
    <property type="evidence" value="ECO:0007669"/>
    <property type="project" value="UniProtKB-UniRule"/>
</dbReference>
<dbReference type="CDD" id="cd01658">
    <property type="entry name" value="Ribosomal_L30"/>
    <property type="match status" value="1"/>
</dbReference>
<dbReference type="Gene3D" id="3.30.1390.20">
    <property type="entry name" value="Ribosomal protein L30, ferredoxin-like fold domain"/>
    <property type="match status" value="1"/>
</dbReference>
<dbReference type="HAMAP" id="MF_01371_B">
    <property type="entry name" value="Ribosomal_uL30_B"/>
    <property type="match status" value="1"/>
</dbReference>
<dbReference type="InterPro" id="IPR036919">
    <property type="entry name" value="Ribo_uL30_ferredoxin-like_sf"/>
</dbReference>
<dbReference type="InterPro" id="IPR005996">
    <property type="entry name" value="Ribosomal_uL30_bac-type"/>
</dbReference>
<dbReference type="InterPro" id="IPR016082">
    <property type="entry name" value="Ribosomal_uL30_ferredoxin-like"/>
</dbReference>
<dbReference type="NCBIfam" id="TIGR01308">
    <property type="entry name" value="rpmD_bact"/>
    <property type="match status" value="1"/>
</dbReference>
<dbReference type="PANTHER" id="PTHR15892:SF2">
    <property type="entry name" value="LARGE RIBOSOMAL SUBUNIT PROTEIN UL30M"/>
    <property type="match status" value="1"/>
</dbReference>
<dbReference type="PANTHER" id="PTHR15892">
    <property type="entry name" value="MITOCHONDRIAL RIBOSOMAL PROTEIN L30"/>
    <property type="match status" value="1"/>
</dbReference>
<dbReference type="Pfam" id="PF00327">
    <property type="entry name" value="Ribosomal_L30"/>
    <property type="match status" value="1"/>
</dbReference>
<dbReference type="PIRSF" id="PIRSF002211">
    <property type="entry name" value="Ribosomal_L30_bac-type"/>
    <property type="match status" value="1"/>
</dbReference>
<dbReference type="SUPFAM" id="SSF55129">
    <property type="entry name" value="Ribosomal protein L30p/L7e"/>
    <property type="match status" value="1"/>
</dbReference>
<sequence>MEKLKSIKITLVKSLIGAKKRHRLIIQGMGLRKINRTVFLPDLPSTRGMINKTAYLLKVEE</sequence>
<evidence type="ECO:0000255" key="1">
    <source>
        <dbReference type="HAMAP-Rule" id="MF_01371"/>
    </source>
</evidence>
<evidence type="ECO:0000305" key="2"/>